<feature type="chain" id="PRO_0000410662" description="Biogenesis of lysosome-related organelles complex 1 subunit SNN1">
    <location>
        <begin position="1"/>
        <end position="102"/>
    </location>
</feature>
<feature type="coiled-coil region" evidence="2">
    <location>
        <begin position="71"/>
        <end position="102"/>
    </location>
</feature>
<protein>
    <recommendedName>
        <fullName>Biogenesis of lysosome-related organelles complex 1 subunit SNN1</fullName>
        <shortName>BLOC-1 subunit SNN1</shortName>
    </recommendedName>
    <alternativeName>
        <fullName>SNAPIN-like protein 1</fullName>
    </alternativeName>
</protein>
<reference key="1">
    <citation type="journal article" date="2009" name="Genome Res.">
        <title>Genome structure of a Saccharomyces cerevisiae strain widely used in bioethanol production.</title>
        <authorList>
            <person name="Argueso J.L."/>
            <person name="Carazzolle M.F."/>
            <person name="Mieczkowski P.A."/>
            <person name="Duarte F.M."/>
            <person name="Netto O.V.C."/>
            <person name="Missawa S.K."/>
            <person name="Galzerani F."/>
            <person name="Costa G.G.L."/>
            <person name="Vidal R.O."/>
            <person name="Noronha M.F."/>
            <person name="Dominska M."/>
            <person name="Andrietta M.G.S."/>
            <person name="Andrietta S.R."/>
            <person name="Cunha A.F."/>
            <person name="Gomes L.H."/>
            <person name="Tavares F.C.A."/>
            <person name="Alcarde A.R."/>
            <person name="Dietrich F.S."/>
            <person name="McCusker J.H."/>
            <person name="Petes T.D."/>
            <person name="Pereira G.A.G."/>
        </authorList>
    </citation>
    <scope>NUCLEOTIDE SEQUENCE [LARGE SCALE GENOMIC DNA]</scope>
    <source>
        <strain>JAY291</strain>
    </source>
</reference>
<keyword id="KW-0175">Coiled coil</keyword>
<keyword id="KW-0967">Endosome</keyword>
<keyword id="KW-0813">Transport</keyword>
<name>SNAPN_YEAS2</name>
<dbReference type="EMBL" id="ACFL01000317">
    <property type="protein sequence ID" value="EEU05495.1"/>
    <property type="molecule type" value="Genomic_DNA"/>
</dbReference>
<dbReference type="SMR" id="C7GUN6"/>
<dbReference type="Proteomes" id="UP000008073">
    <property type="component" value="Unassembled WGS sequence"/>
</dbReference>
<dbReference type="GO" id="GO:0005768">
    <property type="term" value="C:endosome"/>
    <property type="evidence" value="ECO:0007669"/>
    <property type="project" value="UniProtKB-SubCell"/>
</dbReference>
<evidence type="ECO:0000250" key="1"/>
<evidence type="ECO:0000255" key="2"/>
<evidence type="ECO:0000305" key="3"/>
<gene>
    <name type="primary">SNN1</name>
    <name type="ORF">C1Q_04165</name>
</gene>
<proteinExistence type="inferred from homology"/>
<sequence length="102" mass="11470">MAGDSISADGTGVHPVELSVYSVLSTDLDGLYQSINELRESQALLILMLRKVRDKLRREGQVLYDPEPFKPTMDKLADLSARVHILSQRYEELQGNVRALNN</sequence>
<organism>
    <name type="scientific">Saccharomyces cerevisiae (strain JAY291)</name>
    <name type="common">Baker's yeast</name>
    <dbReference type="NCBI Taxonomy" id="574961"/>
    <lineage>
        <taxon>Eukaryota</taxon>
        <taxon>Fungi</taxon>
        <taxon>Dikarya</taxon>
        <taxon>Ascomycota</taxon>
        <taxon>Saccharomycotina</taxon>
        <taxon>Saccharomycetes</taxon>
        <taxon>Saccharomycetales</taxon>
        <taxon>Saccharomycetaceae</taxon>
        <taxon>Saccharomyces</taxon>
    </lineage>
</organism>
<comment type="function">
    <text evidence="1">Component of the biogenesis of lysosome-related organelles complex-1 (BLOC-1), a complex involved in endosomal cargo sorting.</text>
</comment>
<comment type="subunit">
    <text evidence="1">Component of the biogenesis of lysosome-related organelles complex-1 (BLOC-1) composed of at least BLI1, BLS1, CNL1, KXD1, SNN1 and VAB2.</text>
</comment>
<comment type="subcellular location">
    <subcellularLocation>
        <location evidence="1">Endosome</location>
    </subcellularLocation>
</comment>
<comment type="similarity">
    <text evidence="3">Belongs to the SNAPIN family.</text>
</comment>
<accession>C7GUN6</accession>